<keyword id="KW-0963">Cytoplasm</keyword>
<keyword id="KW-0251">Elongation factor</keyword>
<keyword id="KW-0648">Protein biosynthesis</keyword>
<keyword id="KW-1185">Reference proteome</keyword>
<gene>
    <name evidence="1" type="primary">tsf</name>
    <name type="ordered locus">SYNAS_15860</name>
    <name type="ORF">SYN_03145</name>
</gene>
<organism>
    <name type="scientific">Syntrophus aciditrophicus (strain SB)</name>
    <dbReference type="NCBI Taxonomy" id="56780"/>
    <lineage>
        <taxon>Bacteria</taxon>
        <taxon>Pseudomonadati</taxon>
        <taxon>Thermodesulfobacteriota</taxon>
        <taxon>Syntrophia</taxon>
        <taxon>Syntrophales</taxon>
        <taxon>Syntrophaceae</taxon>
        <taxon>Syntrophus</taxon>
    </lineage>
</organism>
<proteinExistence type="inferred from homology"/>
<comment type="function">
    <text evidence="1">Associates with the EF-Tu.GDP complex and induces the exchange of GDP to GTP. It remains bound to the aminoacyl-tRNA.EF-Tu.GTP complex up to the GTP hydrolysis stage on the ribosome.</text>
</comment>
<comment type="subcellular location">
    <subcellularLocation>
        <location evidence="1">Cytoplasm</location>
    </subcellularLocation>
</comment>
<comment type="similarity">
    <text evidence="1">Belongs to the EF-Ts family.</text>
</comment>
<feature type="chain" id="PRO_0000241544" description="Elongation factor Ts">
    <location>
        <begin position="1"/>
        <end position="201"/>
    </location>
</feature>
<feature type="region of interest" description="Involved in Mg(2+) ion dislocation from EF-Tu" evidence="1">
    <location>
        <begin position="81"/>
        <end position="84"/>
    </location>
</feature>
<evidence type="ECO:0000255" key="1">
    <source>
        <dbReference type="HAMAP-Rule" id="MF_00050"/>
    </source>
</evidence>
<sequence length="201" mass="22639">MGITSAMVKELRTKTGAGMMDCKEALTSSNGDFEKAIDYLRKKGMSAATKRSSKAAKEGTIASYIHMGGRIGVMVELNCETDFVAKTEDFKNTAKDIAMHVAASNPTYVNPDEIPEEALEREKEIYRSQALAEKKPEKIWDKIIEGKLNKYYEEVCLTKQKFIKNTDITIETLINNLIAKTGENVIIRRFARYQLGEELKK</sequence>
<reference key="1">
    <citation type="journal article" date="2007" name="Proc. Natl. Acad. Sci. U.S.A.">
        <title>The genome of Syntrophus aciditrophicus: life at the thermodynamic limit of microbial growth.</title>
        <authorList>
            <person name="McInerney M.J."/>
            <person name="Rohlin L."/>
            <person name="Mouttaki H."/>
            <person name="Kim U."/>
            <person name="Krupp R.S."/>
            <person name="Rios-Hernandez L."/>
            <person name="Sieber J."/>
            <person name="Struchtemeyer C.G."/>
            <person name="Bhattacharyya A."/>
            <person name="Campbell J.W."/>
            <person name="Gunsalus R.P."/>
        </authorList>
    </citation>
    <scope>NUCLEOTIDE SEQUENCE [LARGE SCALE GENOMIC DNA]</scope>
    <source>
        <strain>SB</strain>
    </source>
</reference>
<name>EFTS_SYNAS</name>
<protein>
    <recommendedName>
        <fullName evidence="1">Elongation factor Ts</fullName>
        <shortName evidence="1">EF-Ts</shortName>
    </recommendedName>
</protein>
<dbReference type="EMBL" id="CP000252">
    <property type="protein sequence ID" value="ABC77465.1"/>
    <property type="molecule type" value="Genomic_DNA"/>
</dbReference>
<dbReference type="RefSeq" id="WP_011417487.1">
    <property type="nucleotide sequence ID" value="NC_007759.1"/>
</dbReference>
<dbReference type="SMR" id="Q2LTQ6"/>
<dbReference type="FunCoup" id="Q2LTQ6">
    <property type="interactions" value="503"/>
</dbReference>
<dbReference type="STRING" id="56780.SYN_03145"/>
<dbReference type="KEGG" id="sat:SYN_03145"/>
<dbReference type="eggNOG" id="COG0264">
    <property type="taxonomic scope" value="Bacteria"/>
</dbReference>
<dbReference type="HOGENOM" id="CLU_047155_1_1_7"/>
<dbReference type="InParanoid" id="Q2LTQ6"/>
<dbReference type="OrthoDB" id="9808348at2"/>
<dbReference type="Proteomes" id="UP000001933">
    <property type="component" value="Chromosome"/>
</dbReference>
<dbReference type="GO" id="GO:0005737">
    <property type="term" value="C:cytoplasm"/>
    <property type="evidence" value="ECO:0007669"/>
    <property type="project" value="UniProtKB-SubCell"/>
</dbReference>
<dbReference type="GO" id="GO:0003746">
    <property type="term" value="F:translation elongation factor activity"/>
    <property type="evidence" value="ECO:0007669"/>
    <property type="project" value="UniProtKB-UniRule"/>
</dbReference>
<dbReference type="CDD" id="cd14275">
    <property type="entry name" value="UBA_EF-Ts"/>
    <property type="match status" value="1"/>
</dbReference>
<dbReference type="FunFam" id="1.10.286.20:FF:000001">
    <property type="entry name" value="Elongation factor Ts"/>
    <property type="match status" value="1"/>
</dbReference>
<dbReference type="FunFam" id="1.10.8.10:FF:000001">
    <property type="entry name" value="Elongation factor Ts"/>
    <property type="match status" value="1"/>
</dbReference>
<dbReference type="Gene3D" id="1.10.286.20">
    <property type="match status" value="1"/>
</dbReference>
<dbReference type="Gene3D" id="1.10.8.10">
    <property type="entry name" value="DNA helicase RuvA subunit, C-terminal domain"/>
    <property type="match status" value="1"/>
</dbReference>
<dbReference type="Gene3D" id="3.30.479.20">
    <property type="entry name" value="Elongation factor Ts, dimerisation domain"/>
    <property type="match status" value="1"/>
</dbReference>
<dbReference type="HAMAP" id="MF_00050">
    <property type="entry name" value="EF_Ts"/>
    <property type="match status" value="1"/>
</dbReference>
<dbReference type="InterPro" id="IPR036402">
    <property type="entry name" value="EF-Ts_dimer_sf"/>
</dbReference>
<dbReference type="InterPro" id="IPR001816">
    <property type="entry name" value="Transl_elong_EFTs/EF1B"/>
</dbReference>
<dbReference type="InterPro" id="IPR014039">
    <property type="entry name" value="Transl_elong_EFTs/EF1B_dimer"/>
</dbReference>
<dbReference type="InterPro" id="IPR018101">
    <property type="entry name" value="Transl_elong_Ts_CS"/>
</dbReference>
<dbReference type="InterPro" id="IPR009060">
    <property type="entry name" value="UBA-like_sf"/>
</dbReference>
<dbReference type="NCBIfam" id="TIGR00116">
    <property type="entry name" value="tsf"/>
    <property type="match status" value="2"/>
</dbReference>
<dbReference type="PANTHER" id="PTHR11741">
    <property type="entry name" value="ELONGATION FACTOR TS"/>
    <property type="match status" value="1"/>
</dbReference>
<dbReference type="PANTHER" id="PTHR11741:SF0">
    <property type="entry name" value="ELONGATION FACTOR TS, MITOCHONDRIAL"/>
    <property type="match status" value="1"/>
</dbReference>
<dbReference type="Pfam" id="PF00889">
    <property type="entry name" value="EF_TS"/>
    <property type="match status" value="1"/>
</dbReference>
<dbReference type="SUPFAM" id="SSF54713">
    <property type="entry name" value="Elongation factor Ts (EF-Ts), dimerisation domain"/>
    <property type="match status" value="1"/>
</dbReference>
<dbReference type="SUPFAM" id="SSF46934">
    <property type="entry name" value="UBA-like"/>
    <property type="match status" value="1"/>
</dbReference>
<dbReference type="PROSITE" id="PS01126">
    <property type="entry name" value="EF_TS_1"/>
    <property type="match status" value="1"/>
</dbReference>
<dbReference type="PROSITE" id="PS01127">
    <property type="entry name" value="EF_TS_2"/>
    <property type="match status" value="1"/>
</dbReference>
<accession>Q2LTQ6</accession>